<protein>
    <recommendedName>
        <fullName evidence="2">Small ribosomal subunit protein eS26y</fullName>
    </recommendedName>
    <alternativeName>
        <fullName>40S ribosomal protein S26-1</fullName>
    </alternativeName>
</protein>
<organism>
    <name type="scientific">Arabidopsis thaliana</name>
    <name type="common">Mouse-ear cress</name>
    <dbReference type="NCBI Taxonomy" id="3702"/>
    <lineage>
        <taxon>Eukaryota</taxon>
        <taxon>Viridiplantae</taxon>
        <taxon>Streptophyta</taxon>
        <taxon>Embryophyta</taxon>
        <taxon>Tracheophyta</taxon>
        <taxon>Spermatophyta</taxon>
        <taxon>Magnoliopsida</taxon>
        <taxon>eudicotyledons</taxon>
        <taxon>Gunneridae</taxon>
        <taxon>Pentapetalae</taxon>
        <taxon>rosids</taxon>
        <taxon>malvids</taxon>
        <taxon>Brassicales</taxon>
        <taxon>Brassicaceae</taxon>
        <taxon>Camelineae</taxon>
        <taxon>Arabidopsis</taxon>
    </lineage>
</organism>
<keyword id="KW-1185">Reference proteome</keyword>
<keyword id="KW-0687">Ribonucleoprotein</keyword>
<keyword id="KW-0689">Ribosomal protein</keyword>
<sequence>MTFKRRNGGRNKHNRGHVNPIRCSNCGKCCPKDKAIKRFIVRNIVEQAAIRDVQEASVYEGYTLPKLYAKTQYCVSCAIHSHVVRVRSRTNRRVRTPPPRFTRRKEDTPKPGQPGQAPRPAGPGAAAAPRV</sequence>
<reference key="1">
    <citation type="journal article" date="1999" name="Nature">
        <title>Sequence and analysis of chromosome 2 of the plant Arabidopsis thaliana.</title>
        <authorList>
            <person name="Lin X."/>
            <person name="Kaul S."/>
            <person name="Rounsley S.D."/>
            <person name="Shea T.P."/>
            <person name="Benito M.-I."/>
            <person name="Town C.D."/>
            <person name="Fujii C.Y."/>
            <person name="Mason T.M."/>
            <person name="Bowman C.L."/>
            <person name="Barnstead M.E."/>
            <person name="Feldblyum T.V."/>
            <person name="Buell C.R."/>
            <person name="Ketchum K.A."/>
            <person name="Lee J.J."/>
            <person name="Ronning C.M."/>
            <person name="Koo H.L."/>
            <person name="Moffat K.S."/>
            <person name="Cronin L.A."/>
            <person name="Shen M."/>
            <person name="Pai G."/>
            <person name="Van Aken S."/>
            <person name="Umayam L."/>
            <person name="Tallon L.J."/>
            <person name="Gill J.E."/>
            <person name="Adams M.D."/>
            <person name="Carrera A.J."/>
            <person name="Creasy T.H."/>
            <person name="Goodman H.M."/>
            <person name="Somerville C.R."/>
            <person name="Copenhaver G.P."/>
            <person name="Preuss D."/>
            <person name="Nierman W.C."/>
            <person name="White O."/>
            <person name="Eisen J.A."/>
            <person name="Salzberg S.L."/>
            <person name="Fraser C.M."/>
            <person name="Venter J.C."/>
        </authorList>
    </citation>
    <scope>NUCLEOTIDE SEQUENCE [LARGE SCALE GENOMIC DNA]</scope>
    <source>
        <strain>cv. Columbia</strain>
    </source>
</reference>
<reference key="2">
    <citation type="journal article" date="2017" name="Plant J.">
        <title>Araport11: a complete reannotation of the Arabidopsis thaliana reference genome.</title>
        <authorList>
            <person name="Cheng C.Y."/>
            <person name="Krishnakumar V."/>
            <person name="Chan A.P."/>
            <person name="Thibaud-Nissen F."/>
            <person name="Schobel S."/>
            <person name="Town C.D."/>
        </authorList>
    </citation>
    <scope>GENOME REANNOTATION</scope>
    <source>
        <strain>cv. Columbia</strain>
    </source>
</reference>
<reference key="3">
    <citation type="journal article" date="2003" name="Science">
        <title>Empirical analysis of transcriptional activity in the Arabidopsis genome.</title>
        <authorList>
            <person name="Yamada K."/>
            <person name="Lim J."/>
            <person name="Dale J.M."/>
            <person name="Chen H."/>
            <person name="Shinn P."/>
            <person name="Palm C.J."/>
            <person name="Southwick A.M."/>
            <person name="Wu H.C."/>
            <person name="Kim C.J."/>
            <person name="Nguyen M."/>
            <person name="Pham P.K."/>
            <person name="Cheuk R.F."/>
            <person name="Karlin-Newmann G."/>
            <person name="Liu S.X."/>
            <person name="Lam B."/>
            <person name="Sakano H."/>
            <person name="Wu T."/>
            <person name="Yu G."/>
            <person name="Miranda M."/>
            <person name="Quach H.L."/>
            <person name="Tripp M."/>
            <person name="Chang C.H."/>
            <person name="Lee J.M."/>
            <person name="Toriumi M.J."/>
            <person name="Chan M.M."/>
            <person name="Tang C.C."/>
            <person name="Onodera C.S."/>
            <person name="Deng J.M."/>
            <person name="Akiyama K."/>
            <person name="Ansari Y."/>
            <person name="Arakawa T."/>
            <person name="Banh J."/>
            <person name="Banno F."/>
            <person name="Bowser L."/>
            <person name="Brooks S.Y."/>
            <person name="Carninci P."/>
            <person name="Chao Q."/>
            <person name="Choy N."/>
            <person name="Enju A."/>
            <person name="Goldsmith A.D."/>
            <person name="Gurjal M."/>
            <person name="Hansen N.F."/>
            <person name="Hayashizaki Y."/>
            <person name="Johnson-Hopson C."/>
            <person name="Hsuan V.W."/>
            <person name="Iida K."/>
            <person name="Karnes M."/>
            <person name="Khan S."/>
            <person name="Koesema E."/>
            <person name="Ishida J."/>
            <person name="Jiang P.X."/>
            <person name="Jones T."/>
            <person name="Kawai J."/>
            <person name="Kamiya A."/>
            <person name="Meyers C."/>
            <person name="Nakajima M."/>
            <person name="Narusaka M."/>
            <person name="Seki M."/>
            <person name="Sakurai T."/>
            <person name="Satou M."/>
            <person name="Tamse R."/>
            <person name="Vaysberg M."/>
            <person name="Wallender E.K."/>
            <person name="Wong C."/>
            <person name="Yamamura Y."/>
            <person name="Yuan S."/>
            <person name="Shinozaki K."/>
            <person name="Davis R.W."/>
            <person name="Theologis A."/>
            <person name="Ecker J.R."/>
        </authorList>
    </citation>
    <scope>NUCLEOTIDE SEQUENCE [LARGE SCALE MRNA]</scope>
    <source>
        <strain>cv. Columbia</strain>
    </source>
</reference>
<reference key="4">
    <citation type="journal article" date="1993" name="Plant J.">
        <title>An inventory of 1152 expressed sequence tags obtained by partial sequencing of cDNAs from Arabidopsis thaliana.</title>
        <authorList>
            <person name="Hoefte H."/>
            <person name="Desprez T."/>
            <person name="Amselem J."/>
            <person name="Chiapello H."/>
            <person name="Rouze P."/>
            <person name="Caboche M."/>
            <person name="Moisan A."/>
            <person name="Jourjon M.-F."/>
            <person name="Charpenteau J.-L."/>
            <person name="Berthomieu P."/>
            <person name="Guerrier D."/>
            <person name="Giraudat J."/>
            <person name="Quigley F."/>
            <person name="Thomas F."/>
            <person name="Yu D.-Y."/>
            <person name="Mache R."/>
            <person name="Raynal M."/>
            <person name="Cooke R."/>
            <person name="Grellet F."/>
            <person name="Delseny M."/>
            <person name="Parmentier Y."/>
            <person name="de Marcillac G."/>
            <person name="Gigot C."/>
            <person name="Fleck J."/>
            <person name="Philipps G."/>
            <person name="Axelos M."/>
            <person name="Bardet C."/>
            <person name="Tremousaygue D."/>
            <person name="Lescure B."/>
        </authorList>
    </citation>
    <scope>NUCLEOTIDE SEQUENCE [LARGE SCALE MRNA] OF 1-86</scope>
    <source>
        <strain>cv. Columbia</strain>
        <tissue>Seedling</tissue>
    </source>
</reference>
<reference key="5">
    <citation type="journal article" date="2001" name="Plant Physiol.">
        <title>The organization of cytoplasmic ribosomal protein genes in the Arabidopsis genome.</title>
        <authorList>
            <person name="Barakat A."/>
            <person name="Szick-Miranda K."/>
            <person name="Chang I.-F."/>
            <person name="Guyot R."/>
            <person name="Blanc G."/>
            <person name="Cooke R."/>
            <person name="Delseny M."/>
            <person name="Bailey-Serres J."/>
        </authorList>
    </citation>
    <scope>GENE FAMILY ORGANIZATION</scope>
    <scope>NOMENCLATURE</scope>
</reference>
<reference key="6">
    <citation type="journal article" date="2023" name="Plant Cell">
        <title>An updated nomenclature for plant ribosomal protein genes.</title>
        <authorList>
            <person name="Scarpin M.R."/>
            <person name="Busche M."/>
            <person name="Martinez R.E."/>
            <person name="Harper L.C."/>
            <person name="Reiser L."/>
            <person name="Szakonyi D."/>
            <person name="Merchante C."/>
            <person name="Lan T."/>
            <person name="Xiong W."/>
            <person name="Mo B."/>
            <person name="Tang G."/>
            <person name="Chen X."/>
            <person name="Bailey-Serres J."/>
            <person name="Browning K.S."/>
            <person name="Brunkard J.O."/>
        </authorList>
    </citation>
    <scope>NOMENCLATURE</scope>
</reference>
<gene>
    <name type="primary">RPS26A</name>
    <name type="ordered locus">At2g40590</name>
    <name type="ORF">T2P4.6</name>
</gene>
<feature type="chain" id="PRO_0000204522" description="Small ribosomal subunit protein eS26y">
    <location>
        <begin position="1"/>
        <end position="131"/>
    </location>
</feature>
<feature type="region of interest" description="Disordered" evidence="1">
    <location>
        <begin position="86"/>
        <end position="131"/>
    </location>
</feature>
<feature type="compositionally biased region" description="Basic residues" evidence="1">
    <location>
        <begin position="86"/>
        <end position="95"/>
    </location>
</feature>
<feature type="compositionally biased region" description="Low complexity" evidence="1">
    <location>
        <begin position="113"/>
        <end position="131"/>
    </location>
</feature>
<feature type="sequence conflict" description="In Ref. 4; CAA79121." evidence="3" ref="4">
    <original>N</original>
    <variation>K</variation>
    <location>
        <position position="19"/>
    </location>
</feature>
<feature type="sequence conflict" description="In Ref. 4." evidence="3" ref="4">
    <original>RV</original>
    <variation>ES</variation>
    <location>
        <begin position="85"/>
        <end position="86"/>
    </location>
</feature>
<name>RS261_ARATH</name>
<accession>P49206</accession>
<accession>O22876</accession>
<evidence type="ECO:0000256" key="1">
    <source>
        <dbReference type="SAM" id="MobiDB-lite"/>
    </source>
</evidence>
<evidence type="ECO:0000303" key="2">
    <source>
    </source>
</evidence>
<evidence type="ECO:0000305" key="3"/>
<comment type="similarity">
    <text evidence="3">Belongs to the eukaryotic ribosomal protein eS26 family.</text>
</comment>
<proteinExistence type="evidence at transcript level"/>
<dbReference type="EMBL" id="AC002336">
    <property type="protein sequence ID" value="AAB87578.1"/>
    <property type="molecule type" value="Genomic_DNA"/>
</dbReference>
<dbReference type="EMBL" id="CP002685">
    <property type="protein sequence ID" value="AEC09852.1"/>
    <property type="molecule type" value="Genomic_DNA"/>
</dbReference>
<dbReference type="EMBL" id="AY127000">
    <property type="protein sequence ID" value="AAM83227.1"/>
    <property type="molecule type" value="mRNA"/>
</dbReference>
<dbReference type="EMBL" id="BT001026">
    <property type="protein sequence ID" value="AAN46780.1"/>
    <property type="molecule type" value="mRNA"/>
</dbReference>
<dbReference type="EMBL" id="Z18167">
    <property type="protein sequence ID" value="CAA79121.1"/>
    <property type="molecule type" value="mRNA"/>
</dbReference>
<dbReference type="PIR" id="D84831">
    <property type="entry name" value="D84831"/>
</dbReference>
<dbReference type="RefSeq" id="NP_181591.1">
    <property type="nucleotide sequence ID" value="NM_129621.4"/>
</dbReference>
<dbReference type="SMR" id="P49206"/>
<dbReference type="BioGRID" id="3992">
    <property type="interactions" value="149"/>
</dbReference>
<dbReference type="FunCoup" id="P49206">
    <property type="interactions" value="2848"/>
</dbReference>
<dbReference type="IntAct" id="P49206">
    <property type="interactions" value="3"/>
</dbReference>
<dbReference type="STRING" id="3702.P49206"/>
<dbReference type="iPTMnet" id="P49206"/>
<dbReference type="PaxDb" id="3702-AT2G40590.1"/>
<dbReference type="ProteomicsDB" id="237015"/>
<dbReference type="EnsemblPlants" id="AT2G40590.1">
    <property type="protein sequence ID" value="AT2G40590.1"/>
    <property type="gene ID" value="AT2G40590"/>
</dbReference>
<dbReference type="GeneID" id="818654"/>
<dbReference type="Gramene" id="AT2G40590.1">
    <property type="protein sequence ID" value="AT2G40590.1"/>
    <property type="gene ID" value="AT2G40590"/>
</dbReference>
<dbReference type="KEGG" id="ath:AT2G40590"/>
<dbReference type="Araport" id="AT2G40590"/>
<dbReference type="TAIR" id="AT2G40590"/>
<dbReference type="eggNOG" id="KOG1768">
    <property type="taxonomic scope" value="Eukaryota"/>
</dbReference>
<dbReference type="HOGENOM" id="CLU_129451_0_1_1"/>
<dbReference type="InParanoid" id="P49206"/>
<dbReference type="OMA" id="IYRKVYY"/>
<dbReference type="OrthoDB" id="1111261at2759"/>
<dbReference type="PhylomeDB" id="P49206"/>
<dbReference type="PRO" id="PR:P49206"/>
<dbReference type="Proteomes" id="UP000006548">
    <property type="component" value="Chromosome 2"/>
</dbReference>
<dbReference type="ExpressionAtlas" id="P49206">
    <property type="expression patterns" value="baseline and differential"/>
</dbReference>
<dbReference type="GO" id="GO:0022627">
    <property type="term" value="C:cytosolic small ribosomal subunit"/>
    <property type="evidence" value="ECO:0007005"/>
    <property type="project" value="TAIR"/>
</dbReference>
<dbReference type="GO" id="GO:0003729">
    <property type="term" value="F:mRNA binding"/>
    <property type="evidence" value="ECO:0000314"/>
    <property type="project" value="TAIR"/>
</dbReference>
<dbReference type="GO" id="GO:0003735">
    <property type="term" value="F:structural constituent of ribosome"/>
    <property type="evidence" value="ECO:0000314"/>
    <property type="project" value="CAFA"/>
</dbReference>
<dbReference type="GO" id="GO:0006412">
    <property type="term" value="P:translation"/>
    <property type="evidence" value="ECO:0007669"/>
    <property type="project" value="InterPro"/>
</dbReference>
<dbReference type="FunFam" id="3.30.1740.20:FF:000002">
    <property type="entry name" value="40S ribosomal protein S26"/>
    <property type="match status" value="1"/>
</dbReference>
<dbReference type="Gene3D" id="3.30.1740.20">
    <property type="entry name" value="Ribosomal protein S26e"/>
    <property type="match status" value="1"/>
</dbReference>
<dbReference type="InterPro" id="IPR000892">
    <property type="entry name" value="Ribosomal_eS26"/>
</dbReference>
<dbReference type="InterPro" id="IPR047864">
    <property type="entry name" value="Ribosomal_eS26_CS"/>
</dbReference>
<dbReference type="InterPro" id="IPR038551">
    <property type="entry name" value="Ribosomal_eS26_sf"/>
</dbReference>
<dbReference type="PANTHER" id="PTHR12538">
    <property type="entry name" value="40S RIBOSOMAL PROTEIN S26"/>
    <property type="match status" value="1"/>
</dbReference>
<dbReference type="PANTHER" id="PTHR12538:SF0">
    <property type="entry name" value="40S RIBOSOMAL PROTEIN S26"/>
    <property type="match status" value="1"/>
</dbReference>
<dbReference type="Pfam" id="PF01283">
    <property type="entry name" value="Ribosomal_S26e"/>
    <property type="match status" value="1"/>
</dbReference>
<dbReference type="PROSITE" id="PS00733">
    <property type="entry name" value="RIBOSOMAL_S26E"/>
    <property type="match status" value="1"/>
</dbReference>